<proteinExistence type="inferred from homology"/>
<accession>A8L6E2</accession>
<comment type="function">
    <text evidence="1">Converts 2C-methyl-D-erythritol 2,4-cyclodiphosphate (ME-2,4cPP) into 1-hydroxy-2-methyl-2-(E)-butenyl 4-diphosphate.</text>
</comment>
<comment type="catalytic activity">
    <reaction evidence="1">
        <text>(2E)-4-hydroxy-3-methylbut-2-enyl diphosphate + oxidized [flavodoxin] + H2O + 2 H(+) = 2-C-methyl-D-erythritol 2,4-cyclic diphosphate + reduced [flavodoxin]</text>
        <dbReference type="Rhea" id="RHEA:43604"/>
        <dbReference type="Rhea" id="RHEA-COMP:10622"/>
        <dbReference type="Rhea" id="RHEA-COMP:10623"/>
        <dbReference type="ChEBI" id="CHEBI:15377"/>
        <dbReference type="ChEBI" id="CHEBI:15378"/>
        <dbReference type="ChEBI" id="CHEBI:57618"/>
        <dbReference type="ChEBI" id="CHEBI:58210"/>
        <dbReference type="ChEBI" id="CHEBI:58483"/>
        <dbReference type="ChEBI" id="CHEBI:128753"/>
        <dbReference type="EC" id="1.17.7.3"/>
    </reaction>
</comment>
<comment type="cofactor">
    <cofactor evidence="1">
        <name>[4Fe-4S] cluster</name>
        <dbReference type="ChEBI" id="CHEBI:49883"/>
    </cofactor>
    <text evidence="1">Binds 1 [4Fe-4S] cluster.</text>
</comment>
<comment type="pathway">
    <text evidence="1">Isoprenoid biosynthesis; isopentenyl diphosphate biosynthesis via DXP pathway; isopentenyl diphosphate from 1-deoxy-D-xylulose 5-phosphate: step 5/6.</text>
</comment>
<comment type="similarity">
    <text evidence="1">Belongs to the IspG family.</text>
</comment>
<reference key="1">
    <citation type="journal article" date="2007" name="Genome Res.">
        <title>Genome characteristics of facultatively symbiotic Frankia sp. strains reflect host range and host plant biogeography.</title>
        <authorList>
            <person name="Normand P."/>
            <person name="Lapierre P."/>
            <person name="Tisa L.S."/>
            <person name="Gogarten J.P."/>
            <person name="Alloisio N."/>
            <person name="Bagnarol E."/>
            <person name="Bassi C.A."/>
            <person name="Berry A.M."/>
            <person name="Bickhart D.M."/>
            <person name="Choisne N."/>
            <person name="Couloux A."/>
            <person name="Cournoyer B."/>
            <person name="Cruveiller S."/>
            <person name="Daubin V."/>
            <person name="Demange N."/>
            <person name="Francino M.P."/>
            <person name="Goltsman E."/>
            <person name="Huang Y."/>
            <person name="Kopp O.R."/>
            <person name="Labarre L."/>
            <person name="Lapidus A."/>
            <person name="Lavire C."/>
            <person name="Marechal J."/>
            <person name="Martinez M."/>
            <person name="Mastronunzio J.E."/>
            <person name="Mullin B.C."/>
            <person name="Niemann J."/>
            <person name="Pujic P."/>
            <person name="Rawnsley T."/>
            <person name="Rouy Z."/>
            <person name="Schenowitz C."/>
            <person name="Sellstedt A."/>
            <person name="Tavares F."/>
            <person name="Tomkins J.P."/>
            <person name="Vallenet D."/>
            <person name="Valverde C."/>
            <person name="Wall L.G."/>
            <person name="Wang Y."/>
            <person name="Medigue C."/>
            <person name="Benson D.R."/>
        </authorList>
    </citation>
    <scope>NUCLEOTIDE SEQUENCE [LARGE SCALE GENOMIC DNA]</scope>
    <source>
        <strain>EAN1pec</strain>
    </source>
</reference>
<evidence type="ECO:0000255" key="1">
    <source>
        <dbReference type="HAMAP-Rule" id="MF_00159"/>
    </source>
</evidence>
<feature type="chain" id="PRO_1000123449" description="4-hydroxy-3-methylbut-2-en-1-yl diphosphate synthase (flavodoxin)">
    <location>
        <begin position="1"/>
        <end position="384"/>
    </location>
</feature>
<feature type="binding site" evidence="1">
    <location>
        <position position="280"/>
    </location>
    <ligand>
        <name>[4Fe-4S] cluster</name>
        <dbReference type="ChEBI" id="CHEBI:49883"/>
    </ligand>
</feature>
<feature type="binding site" evidence="1">
    <location>
        <position position="283"/>
    </location>
    <ligand>
        <name>[4Fe-4S] cluster</name>
        <dbReference type="ChEBI" id="CHEBI:49883"/>
    </ligand>
</feature>
<feature type="binding site" evidence="1">
    <location>
        <position position="315"/>
    </location>
    <ligand>
        <name>[4Fe-4S] cluster</name>
        <dbReference type="ChEBI" id="CHEBI:49883"/>
    </ligand>
</feature>
<feature type="binding site" evidence="1">
    <location>
        <position position="322"/>
    </location>
    <ligand>
        <name>[4Fe-4S] cluster</name>
        <dbReference type="ChEBI" id="CHEBI:49883"/>
    </ligand>
</feature>
<gene>
    <name evidence="1" type="primary">ispG</name>
    <name type="ordered locus">Franean1_1170</name>
</gene>
<name>ISPG_PARS2</name>
<organism>
    <name type="scientific">Parafrankia sp. (strain EAN1pec)</name>
    <dbReference type="NCBI Taxonomy" id="298653"/>
    <lineage>
        <taxon>Bacteria</taxon>
        <taxon>Bacillati</taxon>
        <taxon>Actinomycetota</taxon>
        <taxon>Actinomycetes</taxon>
        <taxon>Frankiales</taxon>
        <taxon>Frankiaceae</taxon>
        <taxon>Parafrankia</taxon>
    </lineage>
</organism>
<keyword id="KW-0004">4Fe-4S</keyword>
<keyword id="KW-0408">Iron</keyword>
<keyword id="KW-0411">Iron-sulfur</keyword>
<keyword id="KW-0414">Isoprene biosynthesis</keyword>
<keyword id="KW-0479">Metal-binding</keyword>
<keyword id="KW-0560">Oxidoreductase</keyword>
<sequence>MTVTLGMPAAPPRPVGTRRLSRQIHVGNVPVGGDAPVSIQSMCTTLTSDVNATLQQIAQLTAAGCQIVRVAVPSQDDADALPTIARKSPIPIIADIHFQPKYVFAAIDAGCAAVRVNPGNIKQFDDKVGEIARAAKAAGTPIRIGVNAGSLDKRLLEKYGKATPEALVESALWEASLFEEHDFRDIKISVKHNDPVIMIQAYRLLAQACDYPLHLGVTEAGPAFQGTVKSAVAFGALLSEGIGDTIRVSLSAPPIEEIKVASAILESLGLRERKLEIVSCPSCGRAQVDVYTLANEVSAGLEGMEVPLRVAVMGCVVNGPGEAREADLGVASGNGKGQIFVRGKVIKTVPEAQIVETLIEEAMRLAEQMEADGAASGSPSVSVA</sequence>
<protein>
    <recommendedName>
        <fullName evidence="1">4-hydroxy-3-methylbut-2-en-1-yl diphosphate synthase (flavodoxin)</fullName>
        <ecNumber evidence="1">1.17.7.3</ecNumber>
    </recommendedName>
    <alternativeName>
        <fullName evidence="1">1-hydroxy-2-methyl-2-(E)-butenyl 4-diphosphate synthase</fullName>
    </alternativeName>
</protein>
<dbReference type="EC" id="1.17.7.3" evidence="1"/>
<dbReference type="EMBL" id="CP000820">
    <property type="protein sequence ID" value="ABW10624.1"/>
    <property type="molecule type" value="Genomic_DNA"/>
</dbReference>
<dbReference type="RefSeq" id="WP_020458800.1">
    <property type="nucleotide sequence ID" value="NC_009921.1"/>
</dbReference>
<dbReference type="SMR" id="A8L6E2"/>
<dbReference type="STRING" id="298653.Franean1_1170"/>
<dbReference type="KEGG" id="fre:Franean1_1170"/>
<dbReference type="eggNOG" id="COG0821">
    <property type="taxonomic scope" value="Bacteria"/>
</dbReference>
<dbReference type="HOGENOM" id="CLU_042258_0_0_11"/>
<dbReference type="UniPathway" id="UPA00056">
    <property type="reaction ID" value="UER00096"/>
</dbReference>
<dbReference type="GO" id="GO:0051539">
    <property type="term" value="F:4 iron, 4 sulfur cluster binding"/>
    <property type="evidence" value="ECO:0007669"/>
    <property type="project" value="UniProtKB-UniRule"/>
</dbReference>
<dbReference type="GO" id="GO:0046429">
    <property type="term" value="F:4-hydroxy-3-methylbut-2-en-1-yl diphosphate synthase activity (ferredoxin)"/>
    <property type="evidence" value="ECO:0007669"/>
    <property type="project" value="UniProtKB-UniRule"/>
</dbReference>
<dbReference type="GO" id="GO:0141197">
    <property type="term" value="F:4-hydroxy-3-methylbut-2-enyl-diphosphate synthase activity (flavodoxin)"/>
    <property type="evidence" value="ECO:0007669"/>
    <property type="project" value="UniProtKB-EC"/>
</dbReference>
<dbReference type="GO" id="GO:0005506">
    <property type="term" value="F:iron ion binding"/>
    <property type="evidence" value="ECO:0007669"/>
    <property type="project" value="InterPro"/>
</dbReference>
<dbReference type="GO" id="GO:0019288">
    <property type="term" value="P:isopentenyl diphosphate biosynthetic process, methylerythritol 4-phosphate pathway"/>
    <property type="evidence" value="ECO:0007669"/>
    <property type="project" value="UniProtKB-UniRule"/>
</dbReference>
<dbReference type="GO" id="GO:0016114">
    <property type="term" value="P:terpenoid biosynthetic process"/>
    <property type="evidence" value="ECO:0007669"/>
    <property type="project" value="InterPro"/>
</dbReference>
<dbReference type="FunFam" id="3.20.20.20:FF:000001">
    <property type="entry name" value="4-hydroxy-3-methylbut-2-en-1-yl diphosphate synthase (flavodoxin)"/>
    <property type="match status" value="1"/>
</dbReference>
<dbReference type="FunFam" id="3.30.413.10:FF:000001">
    <property type="entry name" value="4-hydroxy-3-methylbut-2-en-1-yl diphosphate synthase (flavodoxin)"/>
    <property type="match status" value="1"/>
</dbReference>
<dbReference type="Gene3D" id="3.20.20.20">
    <property type="entry name" value="Dihydropteroate synthase-like"/>
    <property type="match status" value="1"/>
</dbReference>
<dbReference type="Gene3D" id="3.30.413.10">
    <property type="entry name" value="Sulfite Reductase Hemoprotein, domain 1"/>
    <property type="match status" value="1"/>
</dbReference>
<dbReference type="HAMAP" id="MF_00159">
    <property type="entry name" value="IspG"/>
    <property type="match status" value="1"/>
</dbReference>
<dbReference type="InterPro" id="IPR011005">
    <property type="entry name" value="Dihydropteroate_synth-like_sf"/>
</dbReference>
<dbReference type="InterPro" id="IPR016425">
    <property type="entry name" value="IspG_bac"/>
</dbReference>
<dbReference type="InterPro" id="IPR004588">
    <property type="entry name" value="IspG_bac-typ"/>
</dbReference>
<dbReference type="InterPro" id="IPR045854">
    <property type="entry name" value="NO2/SO3_Rdtase_4Fe4S_sf"/>
</dbReference>
<dbReference type="NCBIfam" id="TIGR00612">
    <property type="entry name" value="ispG_gcpE"/>
    <property type="match status" value="1"/>
</dbReference>
<dbReference type="NCBIfam" id="NF001540">
    <property type="entry name" value="PRK00366.1"/>
    <property type="match status" value="1"/>
</dbReference>
<dbReference type="PANTHER" id="PTHR30454">
    <property type="entry name" value="4-HYDROXY-3-METHYLBUT-2-EN-1-YL DIPHOSPHATE SYNTHASE"/>
    <property type="match status" value="1"/>
</dbReference>
<dbReference type="PANTHER" id="PTHR30454:SF0">
    <property type="entry name" value="4-HYDROXY-3-METHYLBUT-2-EN-1-YL DIPHOSPHATE SYNTHASE (FERREDOXIN), CHLOROPLASTIC"/>
    <property type="match status" value="1"/>
</dbReference>
<dbReference type="Pfam" id="PF04551">
    <property type="entry name" value="GcpE"/>
    <property type="match status" value="1"/>
</dbReference>
<dbReference type="PIRSF" id="PIRSF004640">
    <property type="entry name" value="IspG"/>
    <property type="match status" value="1"/>
</dbReference>
<dbReference type="SUPFAM" id="SSF51717">
    <property type="entry name" value="Dihydropteroate synthetase-like"/>
    <property type="match status" value="1"/>
</dbReference>
<dbReference type="SUPFAM" id="SSF56014">
    <property type="entry name" value="Nitrite and sulphite reductase 4Fe-4S domain-like"/>
    <property type="match status" value="1"/>
</dbReference>